<gene>
    <name type="primary">UBR2</name>
    <name type="synonym">C6orf133</name>
    <name type="synonym">KIAA0349</name>
</gene>
<accession>Q8IWV8</accession>
<accession>O15057</accession>
<accession>Q4VXK2</accession>
<accession>Q5TFH6</accession>
<accession>Q6P2I2</accession>
<accession>Q6ZUD0</accession>
<evidence type="ECO:0000250" key="1">
    <source>
        <dbReference type="UniProtKB" id="P19812"/>
    </source>
</evidence>
<evidence type="ECO:0000250" key="2">
    <source>
        <dbReference type="UniProtKB" id="Q6WKZ8"/>
    </source>
</evidence>
<evidence type="ECO:0000255" key="3"/>
<evidence type="ECO:0000255" key="4">
    <source>
        <dbReference type="PROSITE-ProRule" id="PRU00508"/>
    </source>
</evidence>
<evidence type="ECO:0000256" key="5">
    <source>
        <dbReference type="SAM" id="MobiDB-lite"/>
    </source>
</evidence>
<evidence type="ECO:0000269" key="6">
    <source>
    </source>
</evidence>
<evidence type="ECO:0000269" key="7">
    <source>
    </source>
</evidence>
<evidence type="ECO:0000269" key="8">
    <source>
    </source>
</evidence>
<evidence type="ECO:0000269" key="9">
    <source>
    </source>
</evidence>
<evidence type="ECO:0000269" key="10">
    <source>
    </source>
</evidence>
<evidence type="ECO:0000269" key="11">
    <source>
    </source>
</evidence>
<evidence type="ECO:0000269" key="12">
    <source>
    </source>
</evidence>
<evidence type="ECO:0000269" key="13">
    <source>
    </source>
</evidence>
<evidence type="ECO:0000269" key="14">
    <source>
    </source>
</evidence>
<evidence type="ECO:0000269" key="15">
    <source>
    </source>
</evidence>
<evidence type="ECO:0000303" key="16">
    <source>
    </source>
</evidence>
<evidence type="ECO:0000303" key="17">
    <source>
    </source>
</evidence>
<evidence type="ECO:0000305" key="18"/>
<evidence type="ECO:0007744" key="19">
    <source>
        <dbReference type="PDB" id="3NY2"/>
    </source>
</evidence>
<evidence type="ECO:0007744" key="20">
    <source>
        <dbReference type="PDB" id="3NY3"/>
    </source>
</evidence>
<evidence type="ECO:0007744" key="21">
    <source>
        <dbReference type="PDB" id="5TDA"/>
    </source>
</evidence>
<evidence type="ECO:0007744" key="22">
    <source>
        <dbReference type="PDB" id="5TDB"/>
    </source>
</evidence>
<evidence type="ECO:0007744" key="23">
    <source>
        <dbReference type="PDB" id="5TDD"/>
    </source>
</evidence>
<evidence type="ECO:0007744" key="24">
    <source>
        <dbReference type="PDB" id="5UM3"/>
    </source>
</evidence>
<evidence type="ECO:0007744" key="25">
    <source>
    </source>
</evidence>
<evidence type="ECO:0007744" key="26">
    <source>
    </source>
</evidence>
<evidence type="ECO:0007829" key="27">
    <source>
        <dbReference type="PDB" id="5TDA"/>
    </source>
</evidence>
<dbReference type="EC" id="2.3.2.27" evidence="2"/>
<dbReference type="EMBL" id="AY061884">
    <property type="protein sequence ID" value="AAL32101.1"/>
    <property type="molecule type" value="mRNA"/>
</dbReference>
<dbReference type="EMBL" id="AK125795">
    <property type="protein sequence ID" value="BAC86295.1"/>
    <property type="molecule type" value="mRNA"/>
</dbReference>
<dbReference type="EMBL" id="AL049843">
    <property type="status" value="NOT_ANNOTATED_CDS"/>
    <property type="molecule type" value="Genomic_DNA"/>
</dbReference>
<dbReference type="EMBL" id="AL136223">
    <property type="status" value="NOT_ANNOTATED_CDS"/>
    <property type="molecule type" value="Genomic_DNA"/>
</dbReference>
<dbReference type="EMBL" id="AL391814">
    <property type="status" value="NOT_ANNOTATED_CDS"/>
    <property type="molecule type" value="Genomic_DNA"/>
</dbReference>
<dbReference type="EMBL" id="BC024217">
    <property type="protein sequence ID" value="AAH24217.1"/>
    <property type="molecule type" value="mRNA"/>
</dbReference>
<dbReference type="EMBL" id="BC064512">
    <property type="protein sequence ID" value="AAH64512.1"/>
    <property type="molecule type" value="mRNA"/>
</dbReference>
<dbReference type="EMBL" id="AB002347">
    <property type="protein sequence ID" value="BAA20806.1"/>
    <property type="molecule type" value="mRNA"/>
</dbReference>
<dbReference type="CCDS" id="CCDS4870.1">
    <molecule id="Q8IWV8-1"/>
</dbReference>
<dbReference type="CCDS" id="CCDS55001.1">
    <molecule id="Q8IWV8-2"/>
</dbReference>
<dbReference type="CCDS" id="CCDS87404.1">
    <molecule id="Q8IWV8-4"/>
</dbReference>
<dbReference type="RefSeq" id="NP_001171730.1">
    <molecule id="Q8IWV8-2"/>
    <property type="nucleotide sequence ID" value="NM_001184801.2"/>
</dbReference>
<dbReference type="RefSeq" id="NP_001350634.1">
    <molecule id="Q8IWV8-4"/>
    <property type="nucleotide sequence ID" value="NM_001363705.2"/>
</dbReference>
<dbReference type="RefSeq" id="NP_056070.1">
    <molecule id="Q8IWV8-1"/>
    <property type="nucleotide sequence ID" value="NM_015255.3"/>
</dbReference>
<dbReference type="RefSeq" id="XP_005249022.1">
    <property type="nucleotide sequence ID" value="XM_005248965.4"/>
</dbReference>
<dbReference type="PDB" id="3NY2">
    <property type="method" value="X-ray"/>
    <property type="resolution" value="2.61 A"/>
    <property type="chains" value="A/B/C/D/E/F/G/H=98-167"/>
</dbReference>
<dbReference type="PDB" id="3NY3">
    <property type="method" value="X-ray"/>
    <property type="resolution" value="1.60 A"/>
    <property type="chains" value="A=98-167"/>
</dbReference>
<dbReference type="PDB" id="5TDA">
    <property type="method" value="X-ray"/>
    <property type="resolution" value="0.79 A"/>
    <property type="chains" value="A=98-168"/>
</dbReference>
<dbReference type="PDB" id="5TDB">
    <property type="method" value="X-ray"/>
    <property type="resolution" value="1.10 A"/>
    <property type="chains" value="A=98-168"/>
</dbReference>
<dbReference type="PDB" id="5TDD">
    <property type="method" value="X-ray"/>
    <property type="resolution" value="1.55 A"/>
    <property type="chains" value="A=98-168"/>
</dbReference>
<dbReference type="PDB" id="5UM3">
    <property type="method" value="X-ray"/>
    <property type="resolution" value="1.20 A"/>
    <property type="chains" value="A=98-167"/>
</dbReference>
<dbReference type="PDBsum" id="3NY2"/>
<dbReference type="PDBsum" id="3NY3"/>
<dbReference type="PDBsum" id="5TDA"/>
<dbReference type="PDBsum" id="5TDB"/>
<dbReference type="PDBsum" id="5TDD"/>
<dbReference type="PDBsum" id="5UM3"/>
<dbReference type="BMRB" id="Q8IWV8"/>
<dbReference type="SMR" id="Q8IWV8"/>
<dbReference type="BioGRID" id="116896">
    <property type="interactions" value="158"/>
</dbReference>
<dbReference type="DIP" id="DIP-38165N"/>
<dbReference type="FunCoup" id="Q8IWV8">
    <property type="interactions" value="2219"/>
</dbReference>
<dbReference type="IntAct" id="Q8IWV8">
    <property type="interactions" value="83"/>
</dbReference>
<dbReference type="MINT" id="Q8IWV8"/>
<dbReference type="STRING" id="9606.ENSP00000361990"/>
<dbReference type="GlyGen" id="Q8IWV8">
    <property type="glycosylation" value="1 site, 1 O-linked glycan (1 site)"/>
</dbReference>
<dbReference type="iPTMnet" id="Q8IWV8"/>
<dbReference type="PhosphoSitePlus" id="Q8IWV8"/>
<dbReference type="BioMuta" id="UBR2"/>
<dbReference type="DMDM" id="73622073"/>
<dbReference type="jPOST" id="Q8IWV8"/>
<dbReference type="MassIVE" id="Q8IWV8"/>
<dbReference type="PaxDb" id="9606-ENSP00000361990"/>
<dbReference type="PeptideAtlas" id="Q8IWV8"/>
<dbReference type="ProteomicsDB" id="70909">
    <molecule id="Q8IWV8-1"/>
</dbReference>
<dbReference type="ProteomicsDB" id="70910">
    <molecule id="Q8IWV8-2"/>
</dbReference>
<dbReference type="ProteomicsDB" id="70911">
    <molecule id="Q8IWV8-3"/>
</dbReference>
<dbReference type="ProteomicsDB" id="70912">
    <molecule id="Q8IWV8-4"/>
</dbReference>
<dbReference type="Pumba" id="Q8IWV8"/>
<dbReference type="Antibodypedia" id="30162">
    <property type="antibodies" value="229 antibodies from 31 providers"/>
</dbReference>
<dbReference type="DNASU" id="23304"/>
<dbReference type="Ensembl" id="ENST00000372899.6">
    <molecule id="Q8IWV8-1"/>
    <property type="protein sequence ID" value="ENSP00000361990.1"/>
    <property type="gene ID" value="ENSG00000024048.11"/>
</dbReference>
<dbReference type="Ensembl" id="ENST00000372901.2">
    <molecule id="Q8IWV8-4"/>
    <property type="protein sequence ID" value="ENSP00000361992.1"/>
    <property type="gene ID" value="ENSG00000024048.11"/>
</dbReference>
<dbReference type="Ensembl" id="ENST00000372903.6">
    <molecule id="Q8IWV8-2"/>
    <property type="protein sequence ID" value="ENSP00000361994.2"/>
    <property type="gene ID" value="ENSG00000024048.11"/>
</dbReference>
<dbReference type="GeneID" id="23304"/>
<dbReference type="KEGG" id="hsa:23304"/>
<dbReference type="MANE-Select" id="ENST00000372901.2">
    <molecule id="Q8IWV8-4"/>
    <property type="protein sequence ID" value="ENSP00000361992.1"/>
    <property type="RefSeq nucleotide sequence ID" value="NM_001363705.2"/>
    <property type="RefSeq protein sequence ID" value="NP_001350634.1"/>
</dbReference>
<dbReference type="UCSC" id="uc003osf.4">
    <molecule id="Q8IWV8-1"/>
    <property type="organism name" value="human"/>
</dbReference>
<dbReference type="AGR" id="HGNC:21289"/>
<dbReference type="CTD" id="23304"/>
<dbReference type="DisGeNET" id="23304"/>
<dbReference type="GeneCards" id="UBR2"/>
<dbReference type="HGNC" id="HGNC:21289">
    <property type="gene designation" value="UBR2"/>
</dbReference>
<dbReference type="HPA" id="ENSG00000024048">
    <property type="expression patterns" value="Low tissue specificity"/>
</dbReference>
<dbReference type="MalaCards" id="UBR2"/>
<dbReference type="MIM" id="609134">
    <property type="type" value="gene"/>
</dbReference>
<dbReference type="neXtProt" id="NX_Q8IWV8"/>
<dbReference type="OpenTargets" id="ENSG00000024048"/>
<dbReference type="PharmGKB" id="PA128394621"/>
<dbReference type="VEuPathDB" id="HostDB:ENSG00000024048"/>
<dbReference type="eggNOG" id="KOG1140">
    <property type="taxonomic scope" value="Eukaryota"/>
</dbReference>
<dbReference type="GeneTree" id="ENSGT00950000183075"/>
<dbReference type="HOGENOM" id="CLU_055226_0_0_1"/>
<dbReference type="InParanoid" id="Q8IWV8"/>
<dbReference type="OMA" id="GEASYMC"/>
<dbReference type="OrthoDB" id="26387at2759"/>
<dbReference type="PAN-GO" id="Q8IWV8">
    <property type="GO annotations" value="5 GO annotations based on evolutionary models"/>
</dbReference>
<dbReference type="PhylomeDB" id="Q8IWV8"/>
<dbReference type="TreeFam" id="TF323875"/>
<dbReference type="PathwayCommons" id="Q8IWV8"/>
<dbReference type="Reactome" id="R-HSA-983168">
    <property type="pathway name" value="Antigen processing: Ubiquitination &amp; Proteasome degradation"/>
</dbReference>
<dbReference type="SignaLink" id="Q8IWV8"/>
<dbReference type="SIGNOR" id="Q8IWV8"/>
<dbReference type="UniPathway" id="UPA00143"/>
<dbReference type="BioGRID-ORCS" id="23304">
    <property type="hits" value="9 hits in 1200 CRISPR screens"/>
</dbReference>
<dbReference type="ChiTaRS" id="UBR2">
    <property type="organism name" value="human"/>
</dbReference>
<dbReference type="EvolutionaryTrace" id="Q8IWV8"/>
<dbReference type="GeneWiki" id="UBR2"/>
<dbReference type="GenomeRNAi" id="23304"/>
<dbReference type="Pharos" id="Q8IWV8">
    <property type="development level" value="Tbio"/>
</dbReference>
<dbReference type="PRO" id="PR:Q8IWV8"/>
<dbReference type="Proteomes" id="UP000005640">
    <property type="component" value="Chromosome 6"/>
</dbReference>
<dbReference type="RNAct" id="Q8IWV8">
    <property type="molecule type" value="protein"/>
</dbReference>
<dbReference type="Bgee" id="ENSG00000024048">
    <property type="expression patterns" value="Expressed in secondary oocyte and 211 other cell types or tissues"/>
</dbReference>
<dbReference type="GO" id="GO:0000785">
    <property type="term" value="C:chromatin"/>
    <property type="evidence" value="ECO:0007669"/>
    <property type="project" value="Ensembl"/>
</dbReference>
<dbReference type="GO" id="GO:0005737">
    <property type="term" value="C:cytoplasm"/>
    <property type="evidence" value="ECO:0000318"/>
    <property type="project" value="GO_Central"/>
</dbReference>
<dbReference type="GO" id="GO:0005829">
    <property type="term" value="C:cytosol"/>
    <property type="evidence" value="ECO:0000304"/>
    <property type="project" value="Reactome"/>
</dbReference>
<dbReference type="GO" id="GO:0005634">
    <property type="term" value="C:nucleus"/>
    <property type="evidence" value="ECO:0007669"/>
    <property type="project" value="UniProtKB-SubCell"/>
</dbReference>
<dbReference type="GO" id="GO:0000151">
    <property type="term" value="C:ubiquitin ligase complex"/>
    <property type="evidence" value="ECO:0000318"/>
    <property type="project" value="GO_Central"/>
</dbReference>
<dbReference type="GO" id="GO:0141053">
    <property type="term" value="F:histone H2A ubiquitin ligase activity"/>
    <property type="evidence" value="ECO:0000250"/>
    <property type="project" value="UniProtKB"/>
</dbReference>
<dbReference type="GO" id="GO:0070728">
    <property type="term" value="F:L-leucine binding"/>
    <property type="evidence" value="ECO:0000314"/>
    <property type="project" value="UniProtKB"/>
</dbReference>
<dbReference type="GO" id="GO:0061630">
    <property type="term" value="F:ubiquitin protein ligase activity"/>
    <property type="evidence" value="ECO:0000314"/>
    <property type="project" value="UniProtKB"/>
</dbReference>
<dbReference type="GO" id="GO:0008270">
    <property type="term" value="F:zinc ion binding"/>
    <property type="evidence" value="ECO:0007669"/>
    <property type="project" value="UniProtKB-KW"/>
</dbReference>
<dbReference type="GO" id="GO:0071233">
    <property type="term" value="P:cellular response to L-leucine"/>
    <property type="evidence" value="ECO:0000314"/>
    <property type="project" value="UniProtKB"/>
</dbReference>
<dbReference type="GO" id="GO:0031507">
    <property type="term" value="P:heterochromatin formation"/>
    <property type="evidence" value="ECO:0000250"/>
    <property type="project" value="UniProtKB"/>
</dbReference>
<dbReference type="GO" id="GO:0007141">
    <property type="term" value="P:male meiosis I"/>
    <property type="evidence" value="ECO:0007669"/>
    <property type="project" value="Ensembl"/>
</dbReference>
<dbReference type="GO" id="GO:0007140">
    <property type="term" value="P:male meiotic nuclear division"/>
    <property type="evidence" value="ECO:0000250"/>
    <property type="project" value="UniProtKB"/>
</dbReference>
<dbReference type="GO" id="GO:0032007">
    <property type="term" value="P:negative regulation of TOR signaling"/>
    <property type="evidence" value="ECO:0000315"/>
    <property type="project" value="UniProtKB"/>
</dbReference>
<dbReference type="GO" id="GO:0050862">
    <property type="term" value="P:positive regulation of T cell receptor signaling pathway"/>
    <property type="evidence" value="ECO:0000314"/>
    <property type="project" value="UniProt"/>
</dbReference>
<dbReference type="GO" id="GO:0043161">
    <property type="term" value="P:proteasome-mediated ubiquitin-dependent protein catabolic process"/>
    <property type="evidence" value="ECO:0000314"/>
    <property type="project" value="UniProtKB"/>
</dbReference>
<dbReference type="GO" id="GO:0070534">
    <property type="term" value="P:protein K63-linked ubiquitination"/>
    <property type="evidence" value="ECO:0000314"/>
    <property type="project" value="UniProt"/>
</dbReference>
<dbReference type="GO" id="GO:0016567">
    <property type="term" value="P:protein ubiquitination"/>
    <property type="evidence" value="ECO:0000318"/>
    <property type="project" value="GO_Central"/>
</dbReference>
<dbReference type="GO" id="GO:0007131">
    <property type="term" value="P:reciprocal meiotic recombination"/>
    <property type="evidence" value="ECO:0000250"/>
    <property type="project" value="UniProtKB"/>
</dbReference>
<dbReference type="GO" id="GO:0007283">
    <property type="term" value="P:spermatogenesis"/>
    <property type="evidence" value="ECO:0000250"/>
    <property type="project" value="UniProtKB"/>
</dbReference>
<dbReference type="GO" id="GO:0010526">
    <property type="term" value="P:transposable element silencing"/>
    <property type="evidence" value="ECO:0000250"/>
    <property type="project" value="UniProtKB"/>
</dbReference>
<dbReference type="GO" id="GO:0071596">
    <property type="term" value="P:ubiquitin-dependent protein catabolic process via the N-end rule pathway"/>
    <property type="evidence" value="ECO:0000314"/>
    <property type="project" value="UniProtKB"/>
</dbReference>
<dbReference type="CDD" id="cd16686">
    <property type="entry name" value="RING-H2_UBR2"/>
    <property type="match status" value="1"/>
</dbReference>
<dbReference type="CDD" id="cd19679">
    <property type="entry name" value="UBR-box_UBR2"/>
    <property type="match status" value="1"/>
</dbReference>
<dbReference type="FunFam" id="2.10.110.30:FF:000001">
    <property type="entry name" value="E3 ubiquitin-protein ligase UBR2 isoform 1"/>
    <property type="match status" value="1"/>
</dbReference>
<dbReference type="FunFam" id="1.10.10.2670:FF:000001">
    <property type="entry name" value="E3 ubiquitin-protein ligase UBR2 isoform X1"/>
    <property type="match status" value="1"/>
</dbReference>
<dbReference type="FunFam" id="3.30.1390.10:FF:000003">
    <property type="entry name" value="E3 ubiquitin-protein ligase UBR2 isoform X1"/>
    <property type="match status" value="1"/>
</dbReference>
<dbReference type="Gene3D" id="2.10.110.30">
    <property type="match status" value="1"/>
</dbReference>
<dbReference type="Gene3D" id="3.30.1390.10">
    <property type="match status" value="1"/>
</dbReference>
<dbReference type="Gene3D" id="1.10.10.2670">
    <property type="entry name" value="E3 ubiquitin-protein ligase"/>
    <property type="match status" value="1"/>
</dbReference>
<dbReference type="InterPro" id="IPR003769">
    <property type="entry name" value="ClpS_core"/>
</dbReference>
<dbReference type="InterPro" id="IPR042065">
    <property type="entry name" value="E3_ELL-like"/>
</dbReference>
<dbReference type="InterPro" id="IPR044046">
    <property type="entry name" value="E3_ligase_UBR-like_C"/>
</dbReference>
<dbReference type="InterPro" id="IPR014719">
    <property type="entry name" value="Ribosomal_bL12_C/ClpS-like"/>
</dbReference>
<dbReference type="InterPro" id="IPR047508">
    <property type="entry name" value="UBR-box_UBR2"/>
</dbReference>
<dbReference type="InterPro" id="IPR039164">
    <property type="entry name" value="UBR1-like"/>
</dbReference>
<dbReference type="InterPro" id="IPR055194">
    <property type="entry name" value="UBR1-like_winged-helix"/>
</dbReference>
<dbReference type="InterPro" id="IPR036390">
    <property type="entry name" value="WH_DNA-bd_sf"/>
</dbReference>
<dbReference type="InterPro" id="IPR003126">
    <property type="entry name" value="Znf_UBR"/>
</dbReference>
<dbReference type="PANTHER" id="PTHR21497:SF28">
    <property type="entry name" value="E3 UBIQUITIN-PROTEIN LIGASE UBR2"/>
    <property type="match status" value="1"/>
</dbReference>
<dbReference type="PANTHER" id="PTHR21497">
    <property type="entry name" value="UBIQUITIN LIGASE E3 ALPHA-RELATED"/>
    <property type="match status" value="1"/>
</dbReference>
<dbReference type="Pfam" id="PF02617">
    <property type="entry name" value="ClpS"/>
    <property type="match status" value="1"/>
</dbReference>
<dbReference type="Pfam" id="PF18995">
    <property type="entry name" value="PRT6_C"/>
    <property type="match status" value="1"/>
</dbReference>
<dbReference type="Pfam" id="PF22960">
    <property type="entry name" value="UBR1-like_wing"/>
    <property type="match status" value="1"/>
</dbReference>
<dbReference type="Pfam" id="PF02207">
    <property type="entry name" value="zf-UBR"/>
    <property type="match status" value="1"/>
</dbReference>
<dbReference type="SMART" id="SM00396">
    <property type="entry name" value="ZnF_UBR1"/>
    <property type="match status" value="1"/>
</dbReference>
<dbReference type="SUPFAM" id="SSF54736">
    <property type="entry name" value="ClpS-like"/>
    <property type="match status" value="1"/>
</dbReference>
<dbReference type="SUPFAM" id="SSF46785">
    <property type="entry name" value="Winged helix' DNA-binding domain"/>
    <property type="match status" value="1"/>
</dbReference>
<dbReference type="PROSITE" id="PS51157">
    <property type="entry name" value="ZF_UBR"/>
    <property type="match status" value="1"/>
</dbReference>
<feature type="initiator methionine" description="Removed" evidence="25 26">
    <location>
        <position position="1"/>
    </location>
</feature>
<feature type="chain" id="PRO_0000056140" description="E3 ubiquitin-protein ligase UBR2">
    <location>
        <begin position="2"/>
        <end position="1755"/>
    </location>
</feature>
<feature type="zinc finger region" description="UBR-type" evidence="4">
    <location>
        <begin position="97"/>
        <end position="168"/>
    </location>
</feature>
<feature type="zinc finger region" description="RING-type; atypical">
    <location>
        <begin position="1108"/>
        <end position="1214"/>
    </location>
</feature>
<feature type="region of interest" description="Disordered" evidence="5">
    <location>
        <begin position="1004"/>
        <end position="1034"/>
    </location>
</feature>
<feature type="region of interest" description="Disordered" evidence="5">
    <location>
        <begin position="1261"/>
        <end position="1287"/>
    </location>
</feature>
<feature type="coiled-coil region" evidence="3">
    <location>
        <begin position="1019"/>
        <end position="1054"/>
    </location>
</feature>
<feature type="compositionally biased region" description="Basic and acidic residues" evidence="5">
    <location>
        <begin position="1021"/>
        <end position="1034"/>
    </location>
</feature>
<feature type="compositionally biased region" description="Polar residues" evidence="5">
    <location>
        <begin position="1266"/>
        <end position="1275"/>
    </location>
</feature>
<feature type="binding site" evidence="10 11 19 20 21 22 23 24">
    <location>
        <position position="99"/>
    </location>
    <ligand>
        <name>Zn(2+)</name>
        <dbReference type="ChEBI" id="CHEBI:29105"/>
        <label>1</label>
    </ligand>
</feature>
<feature type="binding site" evidence="10 11 19 20 21 22 23 24">
    <location>
        <position position="112"/>
    </location>
    <ligand>
        <name>Zn(2+)</name>
        <dbReference type="ChEBI" id="CHEBI:29105"/>
        <label>2</label>
    </ligand>
</feature>
<feature type="binding site" evidence="10 11 19 20 21 22 23 24">
    <location>
        <position position="115"/>
    </location>
    <ligand>
        <name>Zn(2+)</name>
        <dbReference type="ChEBI" id="CHEBI:29105"/>
        <label>2</label>
    </ligand>
</feature>
<feature type="binding site" evidence="10 11 19 20 21 22 23 24">
    <location>
        <position position="124"/>
    </location>
    <ligand>
        <name>Zn(2+)</name>
        <dbReference type="ChEBI" id="CHEBI:29105"/>
        <label>1</label>
    </ligand>
</feature>
<feature type="binding site" evidence="10 11 19 20 21 22 23 24">
    <location>
        <position position="127"/>
    </location>
    <ligand>
        <name>Zn(2+)</name>
        <dbReference type="ChEBI" id="CHEBI:29105"/>
        <label>1</label>
    </ligand>
</feature>
<feature type="binding site" evidence="10 11 19 20 21 22 23 24">
    <location>
        <position position="127"/>
    </location>
    <ligand>
        <name>Zn(2+)</name>
        <dbReference type="ChEBI" id="CHEBI:29105"/>
        <label>3</label>
    </ligand>
</feature>
<feature type="binding site" evidence="10 11 19 20 21 22 23 24">
    <location>
        <position position="133"/>
    </location>
    <ligand>
        <name>Zn(2+)</name>
        <dbReference type="ChEBI" id="CHEBI:29105"/>
        <label>2</label>
    </ligand>
</feature>
<feature type="binding site" evidence="10 11 19 20 21 22 23 24">
    <location>
        <position position="136"/>
    </location>
    <ligand>
        <name>Zn(2+)</name>
        <dbReference type="ChEBI" id="CHEBI:29105"/>
        <label>2</label>
    </ligand>
</feature>
<feature type="binding site" evidence="10 11 20 21">
    <location>
        <position position="148"/>
    </location>
    <ligand>
        <name>a peptide</name>
        <dbReference type="ChEBI" id="CHEBI:60466"/>
    </ligand>
    <ligandPart>
        <name>L-arginine residue</name>
        <dbReference type="ChEBI" id="CHEBI:29965"/>
    </ligandPart>
</feature>
<feature type="binding site" evidence="10 11 19 20 21 22 23 24">
    <location>
        <position position="149"/>
    </location>
    <ligand>
        <name>Zn(2+)</name>
        <dbReference type="ChEBI" id="CHEBI:29105"/>
        <label>1</label>
    </ligand>
</feature>
<feature type="binding site" evidence="10 11 20 21">
    <location>
        <position position="150"/>
    </location>
    <ligand>
        <name>a peptide</name>
        <dbReference type="ChEBI" id="CHEBI:60466"/>
    </ligand>
    <ligandPart>
        <name>L-arginine residue</name>
        <dbReference type="ChEBI" id="CHEBI:29965"/>
    </ligandPart>
</feature>
<feature type="binding site" evidence="10 11 19 20 21 22 23 24">
    <location>
        <position position="151"/>
    </location>
    <ligand>
        <name>Zn(2+)</name>
        <dbReference type="ChEBI" id="CHEBI:29105"/>
        <label>3</label>
    </ligand>
</feature>
<feature type="binding site" evidence="10 11 20">
    <location>
        <position position="153"/>
    </location>
    <ligand>
        <name>a peptide</name>
        <dbReference type="ChEBI" id="CHEBI:60466"/>
    </ligand>
    <ligandPart>
        <name>L-arginine residue</name>
        <dbReference type="ChEBI" id="CHEBI:29965"/>
    </ligandPart>
</feature>
<feature type="binding site" evidence="10 11 19 20 21 22 23 24">
    <location>
        <position position="163"/>
    </location>
    <ligand>
        <name>Zn(2+)</name>
        <dbReference type="ChEBI" id="CHEBI:29105"/>
        <label>3</label>
    </ligand>
</feature>
<feature type="binding site" evidence="10 11 19 20 21 22 23 24">
    <location>
        <position position="166"/>
    </location>
    <ligand>
        <name>Zn(2+)</name>
        <dbReference type="ChEBI" id="CHEBI:29105"/>
        <label>3</label>
    </ligand>
</feature>
<feature type="binding site" evidence="1">
    <location>
        <position position="1108"/>
    </location>
    <ligand>
        <name>Zn(2+)</name>
        <dbReference type="ChEBI" id="CHEBI:29105"/>
        <label>4</label>
    </ligand>
</feature>
<feature type="binding site" evidence="1">
    <location>
        <position position="1111"/>
    </location>
    <ligand>
        <name>Zn(2+)</name>
        <dbReference type="ChEBI" id="CHEBI:29105"/>
        <label>4</label>
    </ligand>
</feature>
<feature type="binding site" evidence="1">
    <location>
        <position position="1168"/>
    </location>
    <ligand>
        <name>Zn(2+)</name>
        <dbReference type="ChEBI" id="CHEBI:29105"/>
        <label>5</label>
    </ligand>
</feature>
<feature type="binding site" evidence="1">
    <location>
        <position position="1170"/>
    </location>
    <ligand>
        <name>Zn(2+)</name>
        <dbReference type="ChEBI" id="CHEBI:29105"/>
        <label>5</label>
    </ligand>
</feature>
<feature type="binding site" evidence="1">
    <location>
        <position position="1173"/>
    </location>
    <ligand>
        <name>Zn(2+)</name>
        <dbReference type="ChEBI" id="CHEBI:29105"/>
        <label>4</label>
    </ligand>
</feature>
<feature type="binding site" evidence="1">
    <location>
        <position position="1176"/>
    </location>
    <ligand>
        <name>Zn(2+)</name>
        <dbReference type="ChEBI" id="CHEBI:29105"/>
        <label>4</label>
    </ligand>
</feature>
<feature type="binding site" evidence="1">
    <location>
        <position position="1210"/>
    </location>
    <ligand>
        <name>Zn(2+)</name>
        <dbReference type="ChEBI" id="CHEBI:29105"/>
        <label>5</label>
    </ligand>
</feature>
<feature type="binding site" evidence="1">
    <location>
        <position position="1213"/>
    </location>
    <ligand>
        <name>Zn(2+)</name>
        <dbReference type="ChEBI" id="CHEBI:29105"/>
        <label>5</label>
    </ligand>
</feature>
<feature type="modified residue" description="N-acetylalanine" evidence="25 26">
    <location>
        <position position="2"/>
    </location>
</feature>
<feature type="modified residue" description="Phosphoserine" evidence="14">
    <location>
        <position position="476"/>
    </location>
</feature>
<feature type="modified residue" description="Phosphoserine" evidence="14">
    <location>
        <position position="1694"/>
    </location>
</feature>
<feature type="modified residue" description="Phosphotyrosine" evidence="14">
    <location>
        <position position="1697"/>
    </location>
</feature>
<feature type="cross-link" description="Glycyl lysine isopeptide (Lys-Gly) (interchain with G-Cter in ubiquitin)" evidence="14">
    <location>
        <position position="94"/>
    </location>
</feature>
<feature type="cross-link" description="Glycyl lysine isopeptide (Lys-Gly) (interchain with G-Cter in ubiquitin)" evidence="14">
    <location>
        <position position="158"/>
    </location>
</feature>
<feature type="cross-link" description="Glycyl lysine isopeptide (Lys-Gly) (interchain with G-Cter in ubiquitin)" evidence="14">
    <location>
        <position position="165"/>
    </location>
</feature>
<feature type="cross-link" description="Glycyl lysine isopeptide (Lys-Gly) (interchain with G-Cter in ubiquitin)" evidence="14">
    <location>
        <position position="248"/>
    </location>
</feature>
<feature type="cross-link" description="Glycyl lysine isopeptide (Lys-Gly) (interchain with G-Cter in ubiquitin)" evidence="14">
    <location>
        <position position="255"/>
    </location>
</feature>
<feature type="cross-link" description="Glycyl lysine isopeptide (Lys-Gly) (interchain with G-Cter in ubiquitin)" evidence="14">
    <location>
        <position position="470"/>
    </location>
</feature>
<feature type="cross-link" description="Glycyl lysine isopeptide (Lys-Gly) (interchain with G-Cter in ubiquitin)" evidence="14">
    <location>
        <position position="488"/>
    </location>
</feature>
<feature type="cross-link" description="Glycyl lysine isopeptide (Lys-Gly) (interchain with G-Cter in ubiquitin)" evidence="14">
    <location>
        <position position="568"/>
    </location>
</feature>
<feature type="cross-link" description="Glycyl lysine isopeptide (Lys-Gly) (interchain with G-Cter in ubiquitin)" evidence="14">
    <location>
        <position position="779"/>
    </location>
</feature>
<feature type="cross-link" description="Glycyl lysine isopeptide (Lys-Gly) (interchain with G-Cter in ubiquitin)" evidence="14">
    <location>
        <position position="789"/>
    </location>
</feature>
<feature type="cross-link" description="Glycyl lysine isopeptide (Lys-Gly) (interchain with G-Cter in ubiquitin)" evidence="14">
    <location>
        <position position="1496"/>
    </location>
</feature>
<feature type="cross-link" description="Glycyl lysine isopeptide (Lys-Gly) (interchain with G-Cter in ubiquitin)" evidence="14">
    <location>
        <position position="1599"/>
    </location>
</feature>
<feature type="cross-link" description="Glycyl lysine isopeptide (Lys-Gly) (interchain with G-Cter in ubiquitin)" evidence="14">
    <location>
        <position position="1689"/>
    </location>
</feature>
<feature type="splice variant" id="VSP_015166" description="In isoform 3." evidence="16">
    <location>
        <begin position="1"/>
        <end position="496"/>
    </location>
</feature>
<feature type="splice variant" id="VSP_015167" description="In isoform 2." evidence="17">
    <original>QQLQRDFMEDDHERAVSVTALSVQFFTAPTLARMLITEENLMS</original>
    <variation>ERLQSDYVTDDHDREFSVADLSVQIFTVPSLFSISAGRSGSPL</variation>
    <location>
        <begin position="397"/>
        <end position="439"/>
    </location>
</feature>
<feature type="splice variant" id="VSP_017130" description="In isoform 4." evidence="18">
    <original>QQLQRDFMEDDHERAVSVTALSVQFFTAPT</original>
    <variation>ERLQSDYVTDDHDREFSVADLSVQIFTVPS</variation>
    <location>
        <begin position="397"/>
        <end position="426"/>
    </location>
</feature>
<feature type="splice variant" id="VSP_015168" description="In isoform 2." evidence="17">
    <location>
        <begin position="440"/>
        <end position="1755"/>
    </location>
</feature>
<feature type="splice variant" id="VSP_015169" description="In isoform 3." evidence="16">
    <original>RQKFLEGFDAFLELLKCM</original>
    <variation>MYAGNIPIYKTESRSRNE</variation>
    <location>
        <begin position="497"/>
        <end position="514"/>
    </location>
</feature>
<feature type="splice variant" id="VSP_015170" description="In isoform 3." evidence="16">
    <original>SSRDKDKAERKRKAEIARLRREKIMAQMSEMQRHFIDENKELFQQTLELD</original>
    <variation>HNFRVQGTKTKLRGREKQRLPDCAEKRSWLRCLKCSGILLMKTKNSFSRH</variation>
    <location>
        <begin position="1022"/>
        <end position="1071"/>
    </location>
</feature>
<feature type="splice variant" id="VSP_015171" description="In isoform 3." evidence="16">
    <location>
        <begin position="1072"/>
        <end position="1755"/>
    </location>
</feature>
<feature type="sequence variant" id="VAR_052117" description="In dbSNP:rs6905054.">
    <original>E</original>
    <variation>D</variation>
    <location>
        <position position="172"/>
    </location>
</feature>
<feature type="sequence variant" id="VAR_059816" description="In dbSNP:rs6917033.">
    <original>A</original>
    <variation>P</variation>
    <location>
        <position position="1095"/>
    </location>
</feature>
<feature type="sequence variant" id="VAR_059817" description="In dbSNP:rs6917033.">
    <original>A</original>
    <variation>S</variation>
    <location>
        <position position="1095"/>
    </location>
</feature>
<feature type="sequence variant" id="VAR_023283" description="In dbSNP:rs6917033." evidence="15">
    <original>A</original>
    <variation>T</variation>
    <location>
        <position position="1095"/>
    </location>
</feature>
<feature type="mutagenesis site" description="Blocks DUSP22-mediated degradation." evidence="14">
    <original>K</original>
    <variation>R</variation>
    <location>
        <position position="94"/>
    </location>
</feature>
<feature type="mutagenesis site" description="36-fold decrease in affinity for N-degron peptide RLFS." evidence="11">
    <original>V</original>
    <variation>L</variation>
    <location>
        <position position="122"/>
    </location>
</feature>
<feature type="mutagenesis site" description="No effect on DUSP22-mediated degradation." evidence="14">
    <original>S</original>
    <variation>D</variation>
    <location>
        <position position="476"/>
    </location>
</feature>
<feature type="mutagenesis site" description="Blocks DUSP22-mediated degradation." evidence="14">
    <original>K</original>
    <variation>R</variation>
    <location>
        <position position="779"/>
    </location>
</feature>
<feature type="mutagenesis site" description="Blocks DUSP22-mediated degradation." evidence="14">
    <original>K</original>
    <variation>R</variation>
    <location>
        <position position="1599"/>
    </location>
</feature>
<feature type="mutagenesis site" description="Enhances interaction with BTRC and undergoes DUSP22-mediated degradation; when associated with F-1697." evidence="14">
    <original>S</original>
    <variation>A</variation>
    <location>
        <position position="1694"/>
    </location>
</feature>
<feature type="mutagenesis site" description="Blocks DUSP22-mediated degradation. Impairs interaction with BTRC, abolishes DUSP22-mediated ubiquitination and degradation; when associated with D-1697." evidence="14">
    <original>S</original>
    <variation>D</variation>
    <location>
        <position position="1694"/>
    </location>
</feature>
<feature type="mutagenesis site" description="Blocks DUSP22-mediated degradation. Impairs interaction with BTRC, abolishes DUSP22-mediated ubiquitination and degradation; when associated with D-1694." evidence="14">
    <original>Y</original>
    <variation>D</variation>
    <location>
        <position position="1697"/>
    </location>
</feature>
<feature type="mutagenesis site" description="Enhances interaction with BTRC and undergoes DUSP22-mediated degradation; when associated with A-1694." evidence="14">
    <original>Y</original>
    <variation>F</variation>
    <location>
        <position position="1697"/>
    </location>
</feature>
<feature type="sequence conflict" description="In Ref. 2; BAC86295." evidence="18" ref="2">
    <original>K</original>
    <variation>R</variation>
    <location>
        <position position="864"/>
    </location>
</feature>
<feature type="strand" evidence="27">
    <location>
        <begin position="108"/>
        <end position="112"/>
    </location>
</feature>
<feature type="turn" evidence="27">
    <location>
        <begin position="113"/>
        <end position="115"/>
    </location>
</feature>
<feature type="strand" evidence="27">
    <location>
        <begin position="116"/>
        <end position="118"/>
    </location>
</feature>
<feature type="helix" evidence="27">
    <location>
        <begin position="125"/>
        <end position="129"/>
    </location>
</feature>
<feature type="helix" evidence="27">
    <location>
        <begin position="132"/>
        <end position="135"/>
    </location>
</feature>
<feature type="strand" evidence="27">
    <location>
        <begin position="138"/>
        <end position="142"/>
    </location>
</feature>
<feature type="turn" evidence="27">
    <location>
        <begin position="154"/>
        <end position="156"/>
    </location>
</feature>
<feature type="strand" evidence="27">
    <location>
        <begin position="157"/>
        <end position="159"/>
    </location>
</feature>
<feature type="turn" evidence="27">
    <location>
        <begin position="164"/>
        <end position="166"/>
    </location>
</feature>
<protein>
    <recommendedName>
        <fullName>E3 ubiquitin-protein ligase UBR2</fullName>
        <ecNumber evidence="2">2.3.2.27</ecNumber>
    </recommendedName>
    <alternativeName>
        <fullName>N-recognin-2</fullName>
    </alternativeName>
    <alternativeName>
        <fullName>Ubiquitin-protein ligase E3-alpha-2</fullName>
    </alternativeName>
    <alternativeName>
        <fullName>Ubiquitin-protein ligase E3-alpha-II</fullName>
    </alternativeName>
</protein>
<keyword id="KW-0002">3D-structure</keyword>
<keyword id="KW-0007">Acetylation</keyword>
<keyword id="KW-0025">Alternative splicing</keyword>
<keyword id="KW-0158">Chromosome</keyword>
<keyword id="KW-0175">Coiled coil</keyword>
<keyword id="KW-1017">Isopeptide bond</keyword>
<keyword id="KW-0479">Metal-binding</keyword>
<keyword id="KW-0539">Nucleus</keyword>
<keyword id="KW-0597">Phosphoprotein</keyword>
<keyword id="KW-1267">Proteomics identification</keyword>
<keyword id="KW-1185">Reference proteome</keyword>
<keyword id="KW-0808">Transferase</keyword>
<keyword id="KW-0832">Ubl conjugation</keyword>
<keyword id="KW-0833">Ubl conjugation pathway</keyword>
<keyword id="KW-0862">Zinc</keyword>
<keyword id="KW-0863">Zinc-finger</keyword>
<reference key="1">
    <citation type="journal article" date="2004" name="Cancer Res.">
        <title>Regulation of protein catabolism by muscle-specific and cytokine-inducible ubiquitin ligase E3alpha-II during cancer cachexia.</title>
        <authorList>
            <person name="Kwak K.S."/>
            <person name="Zhou X."/>
            <person name="Solomon V."/>
            <person name="Baracos V.E."/>
            <person name="Davis J."/>
            <person name="Bannon A.W."/>
            <person name="Boyle W.J."/>
            <person name="Lacey D.L."/>
            <person name="Han H.Q."/>
        </authorList>
    </citation>
    <scope>NUCLEOTIDE SEQUENCE [MRNA] (ISOFORM 1)</scope>
    <scope>TISSUE SPECIFICITY</scope>
    <scope>FUNCTION</scope>
</reference>
<reference key="2">
    <citation type="journal article" date="2004" name="Nat. Genet.">
        <title>Complete sequencing and characterization of 21,243 full-length human cDNAs.</title>
        <authorList>
            <person name="Ota T."/>
            <person name="Suzuki Y."/>
            <person name="Nishikawa T."/>
            <person name="Otsuki T."/>
            <person name="Sugiyama T."/>
            <person name="Irie R."/>
            <person name="Wakamatsu A."/>
            <person name="Hayashi K."/>
            <person name="Sato H."/>
            <person name="Nagai K."/>
            <person name="Kimura K."/>
            <person name="Makita H."/>
            <person name="Sekine M."/>
            <person name="Obayashi M."/>
            <person name="Nishi T."/>
            <person name="Shibahara T."/>
            <person name="Tanaka T."/>
            <person name="Ishii S."/>
            <person name="Yamamoto J."/>
            <person name="Saito K."/>
            <person name="Kawai Y."/>
            <person name="Isono Y."/>
            <person name="Nakamura Y."/>
            <person name="Nagahari K."/>
            <person name="Murakami K."/>
            <person name="Yasuda T."/>
            <person name="Iwayanagi T."/>
            <person name="Wagatsuma M."/>
            <person name="Shiratori A."/>
            <person name="Sudo H."/>
            <person name="Hosoiri T."/>
            <person name="Kaku Y."/>
            <person name="Kodaira H."/>
            <person name="Kondo H."/>
            <person name="Sugawara M."/>
            <person name="Takahashi M."/>
            <person name="Kanda K."/>
            <person name="Yokoi T."/>
            <person name="Furuya T."/>
            <person name="Kikkawa E."/>
            <person name="Omura Y."/>
            <person name="Abe K."/>
            <person name="Kamihara K."/>
            <person name="Katsuta N."/>
            <person name="Sato K."/>
            <person name="Tanikawa M."/>
            <person name="Yamazaki M."/>
            <person name="Ninomiya K."/>
            <person name="Ishibashi T."/>
            <person name="Yamashita H."/>
            <person name="Murakawa K."/>
            <person name="Fujimori K."/>
            <person name="Tanai H."/>
            <person name="Kimata M."/>
            <person name="Watanabe M."/>
            <person name="Hiraoka S."/>
            <person name="Chiba Y."/>
            <person name="Ishida S."/>
            <person name="Ono Y."/>
            <person name="Takiguchi S."/>
            <person name="Watanabe S."/>
            <person name="Yosida M."/>
            <person name="Hotuta T."/>
            <person name="Kusano J."/>
            <person name="Kanehori K."/>
            <person name="Takahashi-Fujii A."/>
            <person name="Hara H."/>
            <person name="Tanase T.-O."/>
            <person name="Nomura Y."/>
            <person name="Togiya S."/>
            <person name="Komai F."/>
            <person name="Hara R."/>
            <person name="Takeuchi K."/>
            <person name="Arita M."/>
            <person name="Imose N."/>
            <person name="Musashino K."/>
            <person name="Yuuki H."/>
            <person name="Oshima A."/>
            <person name="Sasaki N."/>
            <person name="Aotsuka S."/>
            <person name="Yoshikawa Y."/>
            <person name="Matsunawa H."/>
            <person name="Ichihara T."/>
            <person name="Shiohata N."/>
            <person name="Sano S."/>
            <person name="Moriya S."/>
            <person name="Momiyama H."/>
            <person name="Satoh N."/>
            <person name="Takami S."/>
            <person name="Terashima Y."/>
            <person name="Suzuki O."/>
            <person name="Nakagawa S."/>
            <person name="Senoh A."/>
            <person name="Mizoguchi H."/>
            <person name="Goto Y."/>
            <person name="Shimizu F."/>
            <person name="Wakebe H."/>
            <person name="Hishigaki H."/>
            <person name="Watanabe T."/>
            <person name="Sugiyama A."/>
            <person name="Takemoto M."/>
            <person name="Kawakami B."/>
            <person name="Yamazaki M."/>
            <person name="Watanabe K."/>
            <person name="Kumagai A."/>
            <person name="Itakura S."/>
            <person name="Fukuzumi Y."/>
            <person name="Fujimori Y."/>
            <person name="Komiyama M."/>
            <person name="Tashiro H."/>
            <person name="Tanigami A."/>
            <person name="Fujiwara T."/>
            <person name="Ono T."/>
            <person name="Yamada K."/>
            <person name="Fujii Y."/>
            <person name="Ozaki K."/>
            <person name="Hirao M."/>
            <person name="Ohmori Y."/>
            <person name="Kawabata A."/>
            <person name="Hikiji T."/>
            <person name="Kobatake N."/>
            <person name="Inagaki H."/>
            <person name="Ikema Y."/>
            <person name="Okamoto S."/>
            <person name="Okitani R."/>
            <person name="Kawakami T."/>
            <person name="Noguchi S."/>
            <person name="Itoh T."/>
            <person name="Shigeta K."/>
            <person name="Senba T."/>
            <person name="Matsumura K."/>
            <person name="Nakajima Y."/>
            <person name="Mizuno T."/>
            <person name="Morinaga M."/>
            <person name="Sasaki M."/>
            <person name="Togashi T."/>
            <person name="Oyama M."/>
            <person name="Hata H."/>
            <person name="Watanabe M."/>
            <person name="Komatsu T."/>
            <person name="Mizushima-Sugano J."/>
            <person name="Satoh T."/>
            <person name="Shirai Y."/>
            <person name="Takahashi Y."/>
            <person name="Nakagawa K."/>
            <person name="Okumura K."/>
            <person name="Nagase T."/>
            <person name="Nomura N."/>
            <person name="Kikuchi H."/>
            <person name="Masuho Y."/>
            <person name="Yamashita R."/>
            <person name="Nakai K."/>
            <person name="Yada T."/>
            <person name="Nakamura Y."/>
            <person name="Ohara O."/>
            <person name="Isogai T."/>
            <person name="Sugano S."/>
        </authorList>
    </citation>
    <scope>NUCLEOTIDE SEQUENCE [LARGE SCALE MRNA] (ISOFORM 3)</scope>
    <source>
        <tissue>Testis</tissue>
    </source>
</reference>
<reference key="3">
    <citation type="journal article" date="2003" name="Nature">
        <title>The DNA sequence and analysis of human chromosome 6.</title>
        <authorList>
            <person name="Mungall A.J."/>
            <person name="Palmer S.A."/>
            <person name="Sims S.K."/>
            <person name="Edwards C.A."/>
            <person name="Ashurst J.L."/>
            <person name="Wilming L."/>
            <person name="Jones M.C."/>
            <person name="Horton R."/>
            <person name="Hunt S.E."/>
            <person name="Scott C.E."/>
            <person name="Gilbert J.G.R."/>
            <person name="Clamp M.E."/>
            <person name="Bethel G."/>
            <person name="Milne S."/>
            <person name="Ainscough R."/>
            <person name="Almeida J.P."/>
            <person name="Ambrose K.D."/>
            <person name="Andrews T.D."/>
            <person name="Ashwell R.I.S."/>
            <person name="Babbage A.K."/>
            <person name="Bagguley C.L."/>
            <person name="Bailey J."/>
            <person name="Banerjee R."/>
            <person name="Barker D.J."/>
            <person name="Barlow K.F."/>
            <person name="Bates K."/>
            <person name="Beare D.M."/>
            <person name="Beasley H."/>
            <person name="Beasley O."/>
            <person name="Bird C.P."/>
            <person name="Blakey S.E."/>
            <person name="Bray-Allen S."/>
            <person name="Brook J."/>
            <person name="Brown A.J."/>
            <person name="Brown J.Y."/>
            <person name="Burford D.C."/>
            <person name="Burrill W."/>
            <person name="Burton J."/>
            <person name="Carder C."/>
            <person name="Carter N.P."/>
            <person name="Chapman J.C."/>
            <person name="Clark S.Y."/>
            <person name="Clark G."/>
            <person name="Clee C.M."/>
            <person name="Clegg S."/>
            <person name="Cobley V."/>
            <person name="Collier R.E."/>
            <person name="Collins J.E."/>
            <person name="Colman L.K."/>
            <person name="Corby N.R."/>
            <person name="Coville G.J."/>
            <person name="Culley K.M."/>
            <person name="Dhami P."/>
            <person name="Davies J."/>
            <person name="Dunn M."/>
            <person name="Earthrowl M.E."/>
            <person name="Ellington A.E."/>
            <person name="Evans K.A."/>
            <person name="Faulkner L."/>
            <person name="Francis M.D."/>
            <person name="Frankish A."/>
            <person name="Frankland J."/>
            <person name="French L."/>
            <person name="Garner P."/>
            <person name="Garnett J."/>
            <person name="Ghori M.J."/>
            <person name="Gilby L.M."/>
            <person name="Gillson C.J."/>
            <person name="Glithero R.J."/>
            <person name="Grafham D.V."/>
            <person name="Grant M."/>
            <person name="Gribble S."/>
            <person name="Griffiths C."/>
            <person name="Griffiths M.N.D."/>
            <person name="Hall R."/>
            <person name="Halls K.S."/>
            <person name="Hammond S."/>
            <person name="Harley J.L."/>
            <person name="Hart E.A."/>
            <person name="Heath P.D."/>
            <person name="Heathcott R."/>
            <person name="Holmes S.J."/>
            <person name="Howden P.J."/>
            <person name="Howe K.L."/>
            <person name="Howell G.R."/>
            <person name="Huckle E."/>
            <person name="Humphray S.J."/>
            <person name="Humphries M.D."/>
            <person name="Hunt A.R."/>
            <person name="Johnson C.M."/>
            <person name="Joy A.A."/>
            <person name="Kay M."/>
            <person name="Keenan S.J."/>
            <person name="Kimberley A.M."/>
            <person name="King A."/>
            <person name="Laird G.K."/>
            <person name="Langford C."/>
            <person name="Lawlor S."/>
            <person name="Leongamornlert D.A."/>
            <person name="Leversha M."/>
            <person name="Lloyd C.R."/>
            <person name="Lloyd D.M."/>
            <person name="Loveland J.E."/>
            <person name="Lovell J."/>
            <person name="Martin S."/>
            <person name="Mashreghi-Mohammadi M."/>
            <person name="Maslen G.L."/>
            <person name="Matthews L."/>
            <person name="McCann O.T."/>
            <person name="McLaren S.J."/>
            <person name="McLay K."/>
            <person name="McMurray A."/>
            <person name="Moore M.J.F."/>
            <person name="Mullikin J.C."/>
            <person name="Niblett D."/>
            <person name="Nickerson T."/>
            <person name="Novik K.L."/>
            <person name="Oliver K."/>
            <person name="Overton-Larty E.K."/>
            <person name="Parker A."/>
            <person name="Patel R."/>
            <person name="Pearce A.V."/>
            <person name="Peck A.I."/>
            <person name="Phillimore B.J.C.T."/>
            <person name="Phillips S."/>
            <person name="Plumb R.W."/>
            <person name="Porter K.M."/>
            <person name="Ramsey Y."/>
            <person name="Ranby S.A."/>
            <person name="Rice C.M."/>
            <person name="Ross M.T."/>
            <person name="Searle S.M."/>
            <person name="Sehra H.K."/>
            <person name="Sheridan E."/>
            <person name="Skuce C.D."/>
            <person name="Smith S."/>
            <person name="Smith M."/>
            <person name="Spraggon L."/>
            <person name="Squares S.L."/>
            <person name="Steward C.A."/>
            <person name="Sycamore N."/>
            <person name="Tamlyn-Hall G."/>
            <person name="Tester J."/>
            <person name="Theaker A.J."/>
            <person name="Thomas D.W."/>
            <person name="Thorpe A."/>
            <person name="Tracey A."/>
            <person name="Tromans A."/>
            <person name="Tubby B."/>
            <person name="Wall M."/>
            <person name="Wallis J.M."/>
            <person name="West A.P."/>
            <person name="White S.S."/>
            <person name="Whitehead S.L."/>
            <person name="Whittaker H."/>
            <person name="Wild A."/>
            <person name="Willey D.J."/>
            <person name="Wilmer T.E."/>
            <person name="Wood J.M."/>
            <person name="Wray P.W."/>
            <person name="Wyatt J.C."/>
            <person name="Young L."/>
            <person name="Younger R.M."/>
            <person name="Bentley D.R."/>
            <person name="Coulson A."/>
            <person name="Durbin R.M."/>
            <person name="Hubbard T."/>
            <person name="Sulston J.E."/>
            <person name="Dunham I."/>
            <person name="Rogers J."/>
            <person name="Beck S."/>
        </authorList>
    </citation>
    <scope>NUCLEOTIDE SEQUENCE [LARGE SCALE GENOMIC DNA]</scope>
</reference>
<reference key="4">
    <citation type="journal article" date="2004" name="Genome Res.">
        <title>The status, quality, and expansion of the NIH full-length cDNA project: the Mammalian Gene Collection (MGC).</title>
        <authorList>
            <consortium name="The MGC Project Team"/>
        </authorList>
    </citation>
    <scope>NUCLEOTIDE SEQUENCE [LARGE SCALE MRNA] (ISOFORM 2)</scope>
    <source>
        <tissue>Ovary</tissue>
    </source>
</reference>
<reference key="5">
    <citation type="journal article" date="1997" name="DNA Res.">
        <title>Prediction of the coding sequences of unidentified human genes. VII. The complete sequences of 100 new cDNA clones from brain which can code for large proteins in vitro.</title>
        <authorList>
            <person name="Nagase T."/>
            <person name="Ishikawa K."/>
            <person name="Nakajima D."/>
            <person name="Ohira M."/>
            <person name="Seki N."/>
            <person name="Miyajima N."/>
            <person name="Tanaka A."/>
            <person name="Kotani H."/>
            <person name="Nomura N."/>
            <person name="Ohara O."/>
        </authorList>
    </citation>
    <scope>NUCLEOTIDE SEQUENCE [LARGE SCALE MRNA] OF 481-1755 (ISOFORMS 1/4)</scope>
    <scope>VARIANT THR-1095</scope>
    <source>
        <tissue>Brain</tissue>
    </source>
</reference>
<reference key="6">
    <citation type="journal article" date="2004" name="Hum. Mol. Genet.">
        <title>RECQL4, mutated in the Rothmund-Thomson and RAPADILINO syndromes, interacts with ubiquitin ligases UBR1 and UBR2 of the N-end rule pathway.</title>
        <authorList>
            <person name="Yin J."/>
            <person name="Kwon Y.T."/>
            <person name="Varshavsky A."/>
            <person name="Wang W."/>
        </authorList>
    </citation>
    <scope>INTERACTION WITH RECQL4</scope>
    <scope>IDENTIFICATION BY MASS SPECTROMETRY</scope>
</reference>
<reference key="7">
    <citation type="journal article" date="2005" name="Nat. Genet.">
        <title>Deficiency of UBR1, a ubiquitin ligase of the N-end rule pathway, causes pancreatic dysfunction, malformations and mental retardation (Johanson-Blizzard syndrome).</title>
        <authorList>
            <person name="Zenker M."/>
            <person name="Mayerle J."/>
            <person name="Lerch M.M."/>
            <person name="Tagariello A."/>
            <person name="Zerres K."/>
            <person name="Durie P.R."/>
            <person name="Beier M."/>
            <person name="Hulskamp G."/>
            <person name="Guzman C."/>
            <person name="Rehder H."/>
            <person name="Beemer F.A."/>
            <person name="Hamel B.C.J."/>
            <person name="Vanlieferinghen P."/>
            <person name="Gershoni-Baruch R."/>
            <person name="Vieira M.W."/>
            <person name="Dumic M."/>
            <person name="Auslender R."/>
            <person name="Gil-da-Silva-Lopes V.L."/>
            <person name="Steinlicht S."/>
            <person name="Rauh M."/>
            <person name="Shalev S.A."/>
            <person name="Thiel C."/>
            <person name="Winterpacht A."/>
            <person name="Kwon Y.T."/>
            <person name="Varshavsky A."/>
            <person name="Reis A."/>
        </authorList>
    </citation>
    <scope>TISSUE SPECIFICITY</scope>
    <scope>DEVELOPMENTAL STAGE</scope>
</reference>
<reference key="8">
    <citation type="journal article" date="2008" name="Proc. Natl. Acad. Sci. U.S.A.">
        <title>A quantitative atlas of mitotic phosphorylation.</title>
        <authorList>
            <person name="Dephoure N."/>
            <person name="Zhou C."/>
            <person name="Villen J."/>
            <person name="Beausoleil S.A."/>
            <person name="Bakalarski C.E."/>
            <person name="Elledge S.J."/>
            <person name="Gygi S.P."/>
        </authorList>
    </citation>
    <scope>IDENTIFICATION BY MASS SPECTROMETRY [LARGE SCALE ANALYSIS]</scope>
    <source>
        <tissue>Cervix carcinoma</tissue>
    </source>
</reference>
<reference key="9">
    <citation type="journal article" date="2009" name="Sci. Signal.">
        <title>Quantitative phosphoproteomic analysis of T cell receptor signaling reveals system-wide modulation of protein-protein interactions.</title>
        <authorList>
            <person name="Mayya V."/>
            <person name="Lundgren D.H."/>
            <person name="Hwang S.-I."/>
            <person name="Rezaul K."/>
            <person name="Wu L."/>
            <person name="Eng J.K."/>
            <person name="Rodionov V."/>
            <person name="Han D.K."/>
        </authorList>
    </citation>
    <scope>IDENTIFICATION BY MASS SPECTROMETRY [LARGE SCALE ANALYSIS]</scope>
    <source>
        <tissue>Leukemic T-cell</tissue>
    </source>
</reference>
<reference key="10">
    <citation type="journal article" date="2010" name="Genes Cells">
        <title>Role of N-end rule ubiquitin ligases UBR1 and UBR2 in regulating the leucine-mTOR signaling pathway.</title>
        <authorList>
            <person name="Kume K."/>
            <person name="Iizumi Y."/>
            <person name="Shimada M."/>
            <person name="Ito Y."/>
            <person name="Kishi T."/>
            <person name="Yamaguchi Y."/>
            <person name="Handa H."/>
        </authorList>
    </citation>
    <scope>FUNCTION</scope>
</reference>
<reference key="11">
    <citation type="journal article" date="2011" name="BMC Syst. Biol.">
        <title>Initial characterization of the human central proteome.</title>
        <authorList>
            <person name="Burkard T.R."/>
            <person name="Planyavsky M."/>
            <person name="Kaupe I."/>
            <person name="Breitwieser F.P."/>
            <person name="Buerckstuemmer T."/>
            <person name="Bennett K.L."/>
            <person name="Superti-Furga G."/>
            <person name="Colinge J."/>
        </authorList>
    </citation>
    <scope>IDENTIFICATION BY MASS SPECTROMETRY [LARGE SCALE ANALYSIS]</scope>
</reference>
<reference key="12">
    <citation type="journal article" date="2012" name="Mol. Cell. Proteomics">
        <title>Comparative large-scale characterisation of plant vs. mammal proteins reveals similar and idiosyncratic N-alpha acetylation features.</title>
        <authorList>
            <person name="Bienvenut W.V."/>
            <person name="Sumpton D."/>
            <person name="Martinez A."/>
            <person name="Lilla S."/>
            <person name="Espagne C."/>
            <person name="Meinnel T."/>
            <person name="Giglione C."/>
        </authorList>
    </citation>
    <scope>ACETYLATION [LARGE SCALE ANALYSIS] AT ALA-2</scope>
    <scope>CLEAVAGE OF INITIATOR METHIONINE [LARGE SCALE ANALYSIS]</scope>
    <scope>IDENTIFICATION BY MASS SPECTROMETRY [LARGE SCALE ANALYSIS]</scope>
</reference>
<reference key="13">
    <citation type="journal article" date="2012" name="Proc. Natl. Acad. Sci. U.S.A.">
        <title>N-terminal acetylome analyses and functional insights of the N-terminal acetyltransferase NatB.</title>
        <authorList>
            <person name="Van Damme P."/>
            <person name="Lasa M."/>
            <person name="Polevoda B."/>
            <person name="Gazquez C."/>
            <person name="Elosegui-Artola A."/>
            <person name="Kim D.S."/>
            <person name="De Juan-Pardo E."/>
            <person name="Demeyer K."/>
            <person name="Hole K."/>
            <person name="Larrea E."/>
            <person name="Timmerman E."/>
            <person name="Prieto J."/>
            <person name="Arnesen T."/>
            <person name="Sherman F."/>
            <person name="Gevaert K."/>
            <person name="Aldabe R."/>
        </authorList>
    </citation>
    <scope>ACETYLATION [LARGE SCALE ANALYSIS] AT ALA-2</scope>
    <scope>CLEAVAGE OF INITIATOR METHIONINE [LARGE SCALE ANALYSIS]</scope>
    <scope>IDENTIFICATION BY MASS SPECTROMETRY [LARGE SCALE ANALYSIS]</scope>
</reference>
<reference key="14">
    <citation type="journal article" date="2013" name="J. Proteome Res.">
        <title>Toward a comprehensive characterization of a human cancer cell phosphoproteome.</title>
        <authorList>
            <person name="Zhou H."/>
            <person name="Di Palma S."/>
            <person name="Preisinger C."/>
            <person name="Peng M."/>
            <person name="Polat A.N."/>
            <person name="Heck A.J."/>
            <person name="Mohammed S."/>
        </authorList>
    </citation>
    <scope>IDENTIFICATION BY MASS SPECTROMETRY [LARGE SCALE ANALYSIS]</scope>
    <source>
        <tissue>Cervix carcinoma</tissue>
        <tissue>Erythroleukemia</tissue>
    </source>
</reference>
<reference key="15">
    <citation type="journal article" date="2017" name="Dev. Cell">
        <title>Coupled Caspase and N-End Rule Ligase Activities Allow Recognition and Degradation of Pluripotency Factor LIN-28 during Non-Apoptotic Development.</title>
        <authorList>
            <person name="Weaver B.P."/>
            <person name="Weaver Y.M."/>
            <person name="Mitani S."/>
            <person name="Han M."/>
        </authorList>
    </citation>
    <scope>INTERACTION WITH CASP8</scope>
</reference>
<reference key="16">
    <citation type="journal article" date="2019" name="J. Biol. Chem.">
        <title>Physiological and pathophysiological characteristics of ataxin-3 isoforms.</title>
        <authorList>
            <person name="Weishaeupl D."/>
            <person name="Schneider J."/>
            <person name="Peixoto Pinheiro B."/>
            <person name="Ruess C."/>
            <person name="Dold S.M."/>
            <person name="von Zweydorf F."/>
            <person name="Gloeckner C.J."/>
            <person name="Schmidt J."/>
            <person name="Riess O."/>
            <person name="Schmidt T."/>
        </authorList>
    </citation>
    <scope>INTERACTION WITH ATXN3</scope>
</reference>
<reference key="17">
    <citation type="journal article" date="2024" name="Nat. Commun.">
        <title>The phosphatase DUSP22 inhibits UBR2-mediated K63-ubiquitination and activation of Lck downstream of TCR signalling.</title>
        <authorList>
            <person name="Shih Y.C."/>
            <person name="Chen H.F."/>
            <person name="Wu C.Y."/>
            <person name="Ciou Y.R."/>
            <person name="Wang C.W."/>
            <person name="Chuang H.C."/>
            <person name="Tan T.H."/>
        </authorList>
    </citation>
    <scope>FUNCTION</scope>
    <scope>IDENTIFICATION BY MASS SPECTROMETRY</scope>
    <scope>PHOSPHORYLATION AT SER-476; SER-1694 AND TYR-1697</scope>
    <scope>DEPHOSPHORYLATION BY DUSP22</scope>
    <scope>UBIQUITINATION AT LYS-94; LYS-158; LYS-165; LYS-248; LYS-255; LYS-470; LYS-488; LYS-568; LYS-779; LYS-789; LYS-1496; LYS-1599 AND LYS-1689</scope>
    <scope>MUTAGENESIS OF LYS-94; SER-476; LYS-779; LYS-1599; SER-1694 AND TYR-1697</scope>
</reference>
<reference evidence="19 20" key="18">
    <citation type="journal article" date="2010" name="Nat. Struct. Mol. Biol.">
        <title>Structural basis of substrate recognition and specificity in the N-end rule pathway.</title>
        <authorList>
            <person name="Matta-Camacho E."/>
            <person name="Kozlov G."/>
            <person name="Li F.F."/>
            <person name="Gehring K."/>
        </authorList>
    </citation>
    <scope>X-RAY CRYSTALLOGRAPHY (1.60 ANGSTROMS) OF 98-167 ALONE AND IN COMPLEX WITH ZINC AND N-DEGRON PEPTIDE</scope>
    <scope>UBR-TYPE ZINC FINGER</scope>
    <scope>FUNCTION</scope>
</reference>
<reference evidence="21 22 23 24" key="19">
    <citation type="journal article" date="2017" name="Structure">
        <title>Bound waters mediate binding of diverse substrates to a ubiquitin ligase.</title>
        <authorList>
            <person name="Munoz-Escobar J."/>
            <person name="Matta-Camacho E."/>
            <person name="Cho C."/>
            <person name="Kozlov G."/>
            <person name="Gehring K."/>
        </authorList>
    </citation>
    <scope>X-RAY CRYSTALLOGRAPHY (0.79 ANGSTROMS) OF 98-168 IN COMPLEX WITH N-DEGRON PEPTIDE AND ZINC</scope>
    <scope>FUNCTION</scope>
    <scope>MUTAGENESIS OF VAL-122</scope>
</reference>
<name>UBR2_HUMAN</name>
<comment type="function">
    <text evidence="2 7 9 10 11 14">E3 ubiquitin-protein ligase which is a component of the N-end rule pathway (PubMed:15548684, PubMed:20835242, PubMed:28392261). Recognizes and binds to proteins bearing specific N-terminal residues (N-degrons) that are destabilizing according to the N-end rule, leading to their ubiquitination and subsequent degradation (PubMed:20835242, PubMed:28392261). Recognizes both type-1 and type-2 N-degrons, containing positively charged amino acids (Arg, Lys and His) and bulky and hydrophobic amino acids, respectively (PubMed:20835242, PubMed:28392261). Does not ubiquitinate proteins that are acetylated at the N-terminus (PubMed:20835242). In contrast, it strongly binds methylated N-degrons (PubMed:28392261). Plays a critical role in chromatin inactivation and chromosome-wide transcriptional silencing during meiosis via ubiquitination of histone H2A (By similarity). Binds leucine and is a negative regulator of the leucine-mTOR signaling pathway, thereby controlling cell growth (PubMed:20298436). Required for spermatogenesis, promotes, with Tex19.1, SPO11-dependent recombination foci to accumulate and drive robust homologous chromosome synapsis (By similarity). Polyubiquitinates LINE-1 retrotransposon encoded, LIRE1, which induces degradation, inhibiting LINE-1 retrotransposon mobilization (By similarity). Catalyzes ubiquitination and degradation of the N-terminal part of NLRP1 following NLRP1 activation by pathogens and other damage-associated signals: ubiquitination promotes degradation of the N-terminal part and subsequent release of the cleaved C-terminal part of NLRP1, which polymerizes and forms the NLRP1 inflammasome followed by host cell pyroptosis (By similarity). Plays a role in T-cell receptor signaling by inducing 'Lys-63'-linked ubiquitination of lymphocyte cell-specific kinase LCK (PubMed:38225265). This activity is regulated by DUSP22, which induces 'Lys-48'-linked ubiquitination of UBR2, leading to its proteasomal degradation by SCF E3 ubiquitin-protein ligase complex (PubMed:38225265).</text>
</comment>
<comment type="catalytic activity">
    <reaction evidence="2">
        <text>S-ubiquitinyl-[E2 ubiquitin-conjugating enzyme]-L-cysteine + [acceptor protein]-L-lysine = [E2 ubiquitin-conjugating enzyme]-L-cysteine + N(6)-ubiquitinyl-[acceptor protein]-L-lysine.</text>
        <dbReference type="EC" id="2.3.2.27"/>
    </reaction>
</comment>
<comment type="pathway">
    <text evidence="2">Protein modification; protein ubiquitination.</text>
</comment>
<comment type="subunit">
    <text evidence="2 6 10 12 13">Interacts with UBE2B; promotes the UBE2B-H2A interaction and the ubiquitination of histone H2A by UBE2B and UBR2 (By similarity). Interacts with RECQL4 (PubMed:15317757, PubMed:20835242). Interacts with TEX19; does not lead to TEX19 degradation and stabilizes it (By similarity). Interacts with CASP8 (PubMed:28602583). Interacts with ATXN3 (PubMed:30455355). Interacts with UBE2O (By similarity).</text>
</comment>
<comment type="interaction">
    <interactant intactId="EBI-1237260">
        <id>Q8IWV8</id>
    </interactant>
    <interactant intactId="EBI-779991">
        <id>P12504</id>
        <label>vif</label>
    </interactant>
    <organismsDiffer>true</organismsDiffer>
    <experiments>3</experiments>
</comment>
<comment type="interaction">
    <interactant intactId="EBI-17923957">
        <id>Q8IWV8-2</id>
    </interactant>
    <interactant intactId="EBI-602382">
        <id>Q16512</id>
        <label>PKN1</label>
    </interactant>
    <organismsDiffer>false</organismsDiffer>
    <experiments>3</experiments>
</comment>
<comment type="interaction">
    <interactant intactId="EBI-17923957">
        <id>Q8IWV8-2</id>
    </interactant>
    <interactant intactId="EBI-3921347">
        <id>P51687</id>
        <label>SUOX</label>
    </interactant>
    <organismsDiffer>false</organismsDiffer>
    <experiments>3</experiments>
</comment>
<comment type="subcellular location">
    <subcellularLocation>
        <location evidence="2">Nucleus</location>
    </subcellularLocation>
    <subcellularLocation>
        <location evidence="2">Chromosome</location>
    </subcellularLocation>
    <text evidence="2">Associated with chromatin during meiosis.</text>
</comment>
<comment type="alternative products">
    <event type="alternative splicing"/>
    <isoform>
        <id>Q8IWV8-1</id>
        <name>1</name>
        <sequence type="displayed"/>
    </isoform>
    <isoform>
        <id>Q8IWV8-2</id>
        <name>2</name>
        <sequence type="described" ref="VSP_015167 VSP_015168"/>
    </isoform>
    <isoform>
        <id>Q8IWV8-3</id>
        <name>3</name>
        <sequence type="described" ref="VSP_015166 VSP_015169 VSP_015170 VSP_015171"/>
    </isoform>
    <isoform>
        <id>Q8IWV8-4</id>
        <name>4</name>
        <sequence type="described" ref="VSP_017130"/>
    </isoform>
</comment>
<comment type="tissue specificity">
    <text evidence="7 8">Broadly expressed, with highest levels in skeletal muscle, kidney and pancreas. Present in acinar cells of the pancreas (at protein level).</text>
</comment>
<comment type="developmental stage">
    <text evidence="8">Expressed in fetal pancreas.</text>
</comment>
<comment type="domain">
    <text evidence="10 11">The RING-H2 zinc finger is an atypical RING finger with a His ligand in place of the fourth Cys of the classical motif (PubMed:20835242). The UBR-type zinc finger forms a pocket that mediates recognition of type 1 N-degrons (PubMed:20835242, PubMed:28392261). It exhibits preference for arginine in the first position, and a lower preference for lysine and histidine (PubMed:20835242). It binds N-degrons with a methylated arginine or lysine in the first position (PubMed:28392261).</text>
</comment>
<comment type="PTM">
    <text evidence="14">Dephosphorylated by DUSP22 at Ser-1694 and Tyr-1697, leading to subsequent ubiquitination and proteasomal degradation.</text>
</comment>
<comment type="PTM">
    <text evidence="14">'Lys-48'-linked ubiquitinated at Lys-94, Lys-779 and Lys-1599 following DUSP22-mediated dephosphorylation of Ser-1694 and Tyr-1697 which promotes UBR2 interaction with the SCF(FBW1A) E3 ubiquitin-protein ligase complex.</text>
</comment>
<comment type="similarity">
    <text evidence="18">Belongs to the E3 ubiquitin-protein ligase UBR1-like family.</text>
</comment>
<proteinExistence type="evidence at protein level"/>
<sequence>MASELEPEVQAIDRSLLECSAEEIAGKWLQATDLTREVYQHLAHYVPKIYCRGPNPFPQKEDMLAQHVLLGPMEWYLCGEDPAFGFPKLEQANKPSHLCGRVFKVGEPTYSCRDCAVDPTCVLCMECFLGSIHRDHRYRMTTSGGGGFCDCGDTEAWKEGPYCQKHELNTSEIEEEEDPLVHLSEDVIARTYNIFAITFRYAVEILTWEKESELPADLEMVEKSDTYYCMLFNDEVHTYEQVIYTLQKAVNCTQKEAIGFATTVDRDGRRSVRYGDFQYCEQAKSVIVRNTSRQTKPLKVQVMHSSIVAHQNFGLKLLSWLGSIIGYSDGLRRILCQVGLQEGPDGENSSLVDRLMLSDSKLWKGARSVYHQLFMSSLLMDLKYKKLFAVRFAKNYQQLQRDFMEDDHERAVSVTALSVQFFTAPTLARMLITEENLMSIIIKTFMDHLRHRDAQGRFQFERYTALQAFKFRRVQSLILDLKYVLISKPTEWSDELRQKFLEGFDAFLELLKCMQGMDPITRQVGQHIEMEPEWEAAFTLQMKLTHVISMMQDWCASDEKVLIEAYKKCLAVLMQCHGGYTDGEQPITLSICGHSVETIRYCVSQEKVSIHLPVSRLLAGLHVLLSKSEVAYKFPELLPLSELSPPMLIEHPLRCLVLCAQVHAGMWRRNGFSLVNQIYYYHNVKCRREMFDKDVVMLQTGVSMMDPNHFLMIMLSRFELYQIFSTPDYGKRFSSEITHKDVVQQNNTLIEEMLYLIIMLVGERFSPGVGQVNATDEIKREIIHQLSIKPMAHSELVKSLPEDENKETGMESVIEAVAHFKKPGLTGRGMYELKPECAKEFNLYFYHFSRAEQSKAEEAQRKLKRQNREDTALPPPVLPPFCPLFASLVNILQSDVMLCIMGTILQWAVEHNGYAWSESMLQRVLHLIGMALQEEKQHLENVTEEHVVTFTFTQKISKPGEAPKNSPSILAMLETLQNAPYLEVHKDMIRWILKTFNAVKKMRESSPTSPVAETEGTIMEESSRDKDKAERKRKAEIARLRREKIMAQMSEMQRHFIDENKELFQQTLELDASTSAVLDHSPVASDMTLTALGPAQTQVPEQRQFVTCILCQEEQEVKVESRAMVLAAFVQRSTVLSKNRSKFIQDPEKYDPLFMHPDLSCGTHTSSCGHIMHAHCWQRYFDSVQAKEQRRQQRLRLHTSYDVENGEFLCPLCECLSNTVIPLLLPPRNIFNNRLNFSDQPNLTQWIRTISQQIKALQFLRKEESTPNNASTKNSENVDELQLPEGFRPDFRPKIPYSESIKEMLTTFGTATYKVGLKVHPNEEDPRVPIMCWGSCAYTIQSIERILSDEDKPLFGPLPCRLDDCLRSLTRFAAAHWTVASVSVVQGHFCKLFASLVPNDSHEELPCILDIDMFHLLVGLVLAFPALQCQDFSGISLGTGDLHIFHLVTMAHIIQILLTSCTEENGMDQENPPCEEESAVLALYKTLHQYTGSALKEIPSGWHLWRSVRAGIMPFLKCSALFFHYLNGVPSPPDIQVPGTSHFEHLCSYLSLPNNLICLFQENSEIMNSLIESWCRNSEVKRYLEGERDAIRYPRESNKLINLPEDYSSLINQASNFSCPKSGGDKSRAPTLCLVCGSLLCSQSYCCQTELEGEDVGACTAHTYSCGSGVGIFLRVRECQVLFLAGKTKGCFYSPPYLDDYGETDQGLRRGNPLHLCKERFKKIQKLWHQHSVTEEIGHAQEANQTLVGIDWQHL</sequence>
<organism>
    <name type="scientific">Homo sapiens</name>
    <name type="common">Human</name>
    <dbReference type="NCBI Taxonomy" id="9606"/>
    <lineage>
        <taxon>Eukaryota</taxon>
        <taxon>Metazoa</taxon>
        <taxon>Chordata</taxon>
        <taxon>Craniata</taxon>
        <taxon>Vertebrata</taxon>
        <taxon>Euteleostomi</taxon>
        <taxon>Mammalia</taxon>
        <taxon>Eutheria</taxon>
        <taxon>Euarchontoglires</taxon>
        <taxon>Primates</taxon>
        <taxon>Haplorrhini</taxon>
        <taxon>Catarrhini</taxon>
        <taxon>Hominidae</taxon>
        <taxon>Homo</taxon>
    </lineage>
</organism>